<feature type="chain" id="PRO_0000333684" description="Methylated-DNA--protein-cysteine methyltransferase">
    <location>
        <begin position="1"/>
        <end position="191"/>
    </location>
</feature>
<feature type="active site" description="Nucleophile; methyl group acceptor" evidence="1">
    <location>
        <position position="151"/>
    </location>
</feature>
<feature type="binding site" evidence="1">
    <location>
        <position position="120"/>
    </location>
    <ligand>
        <name>DNA</name>
        <dbReference type="ChEBI" id="CHEBI:16991"/>
    </ligand>
</feature>
<feature type="binding site" evidence="1">
    <location>
        <position position="134"/>
    </location>
    <ligand>
        <name>DNA</name>
        <dbReference type="ChEBI" id="CHEBI:16991"/>
    </ligand>
</feature>
<protein>
    <recommendedName>
        <fullName>Methylated-DNA--protein-cysteine methyltransferase</fullName>
        <ecNumber>2.1.1.63</ecNumber>
    </recommendedName>
    <alternativeName>
        <fullName>6-O-methylguanine-DNA methyltransferase</fullName>
        <shortName>MGMT</shortName>
    </alternativeName>
    <alternativeName>
        <fullName>DNA repair MTase</fullName>
    </alternativeName>
    <alternativeName>
        <fullName>O-6-methylguanine-DNA-alkyltransferase</fullName>
    </alternativeName>
</protein>
<comment type="function">
    <text evidence="1">Involved in the cellular defense against the biological effects of O6-methylguanine (O6-MeG) and O4-methylthymine (O4-MeT) in DNA. Repairs the methylated nucleobase in DNA by stoichiometrically transferring the methyl group to a cysteine residue in the enzyme. This is a suicide reaction: the enzyme is irreversibly inactivated.</text>
</comment>
<comment type="catalytic activity">
    <reaction>
        <text>a 6-O-methyl-2'-deoxyguanosine in DNA + L-cysteinyl-[protein] = S-methyl-L-cysteinyl-[protein] + a 2'-deoxyguanosine in DNA</text>
        <dbReference type="Rhea" id="RHEA:24000"/>
        <dbReference type="Rhea" id="RHEA-COMP:10131"/>
        <dbReference type="Rhea" id="RHEA-COMP:10132"/>
        <dbReference type="Rhea" id="RHEA-COMP:11367"/>
        <dbReference type="Rhea" id="RHEA-COMP:11368"/>
        <dbReference type="ChEBI" id="CHEBI:29950"/>
        <dbReference type="ChEBI" id="CHEBI:82612"/>
        <dbReference type="ChEBI" id="CHEBI:85445"/>
        <dbReference type="ChEBI" id="CHEBI:85448"/>
        <dbReference type="EC" id="2.1.1.63"/>
    </reaction>
</comment>
<comment type="catalytic activity">
    <reaction>
        <text>a 4-O-methyl-thymidine in DNA + L-cysteinyl-[protein] = a thymidine in DNA + S-methyl-L-cysteinyl-[protein]</text>
        <dbReference type="Rhea" id="RHEA:53428"/>
        <dbReference type="Rhea" id="RHEA-COMP:10131"/>
        <dbReference type="Rhea" id="RHEA-COMP:10132"/>
        <dbReference type="Rhea" id="RHEA-COMP:13555"/>
        <dbReference type="Rhea" id="RHEA-COMP:13556"/>
        <dbReference type="ChEBI" id="CHEBI:29950"/>
        <dbReference type="ChEBI" id="CHEBI:82612"/>
        <dbReference type="ChEBI" id="CHEBI:137386"/>
        <dbReference type="ChEBI" id="CHEBI:137387"/>
        <dbReference type="EC" id="2.1.1.63"/>
    </reaction>
</comment>
<comment type="subcellular location">
    <subcellularLocation>
        <location evidence="1">Nucleus</location>
    </subcellularLocation>
</comment>
<comment type="miscellaneous">
    <text>This enzyme catalyzes only one turnover and therefore is not strictly catalytic. According to one definition, an enzyme is a biocatalyst that acts repeatedly and over many reaction cycles.</text>
</comment>
<comment type="similarity">
    <text evidence="2">Belongs to the MGMT family.</text>
</comment>
<comment type="sequence caution" evidence="2">
    <conflict type="erroneous initiation">
        <sequence resource="EMBL-CDS" id="CAR65503"/>
    </conflict>
</comment>
<keyword id="KW-0227">DNA damage</keyword>
<keyword id="KW-0234">DNA repair</keyword>
<keyword id="KW-0238">DNA-binding</keyword>
<keyword id="KW-0489">Methyltransferase</keyword>
<keyword id="KW-0539">Nucleus</keyword>
<keyword id="KW-1185">Reference proteome</keyword>
<keyword id="KW-0808">Transferase</keyword>
<dbReference type="EC" id="2.1.1.63"/>
<dbReference type="EMBL" id="CR382134">
    <property type="protein sequence ID" value="CAR65503.1"/>
    <property type="status" value="ALT_INIT"/>
    <property type="molecule type" value="Genomic_DNA"/>
</dbReference>
<dbReference type="RefSeq" id="XP_002770134.1">
    <property type="nucleotide sequence ID" value="XM_002770088.1"/>
</dbReference>
<dbReference type="SMR" id="Q6BVY4"/>
<dbReference type="FunCoup" id="Q6BVY4">
    <property type="interactions" value="55"/>
</dbReference>
<dbReference type="STRING" id="284592.Q6BVY4"/>
<dbReference type="GeneID" id="8998265"/>
<dbReference type="KEGG" id="dha:DEHA2B15752g"/>
<dbReference type="eggNOG" id="KOG4062">
    <property type="taxonomic scope" value="Eukaryota"/>
</dbReference>
<dbReference type="HOGENOM" id="CLU_000445_52_2_1"/>
<dbReference type="InParanoid" id="Q6BVY4"/>
<dbReference type="OrthoDB" id="1907495at2759"/>
<dbReference type="Proteomes" id="UP000000599">
    <property type="component" value="Chromosome B"/>
</dbReference>
<dbReference type="GO" id="GO:0005634">
    <property type="term" value="C:nucleus"/>
    <property type="evidence" value="ECO:0007669"/>
    <property type="project" value="UniProtKB-SubCell"/>
</dbReference>
<dbReference type="GO" id="GO:0003677">
    <property type="term" value="F:DNA binding"/>
    <property type="evidence" value="ECO:0007669"/>
    <property type="project" value="UniProtKB-KW"/>
</dbReference>
<dbReference type="GO" id="GO:0003908">
    <property type="term" value="F:methylated-DNA-[protein]-cysteine S-methyltransferase activity"/>
    <property type="evidence" value="ECO:0007669"/>
    <property type="project" value="UniProtKB-EC"/>
</dbReference>
<dbReference type="GO" id="GO:0006281">
    <property type="term" value="P:DNA repair"/>
    <property type="evidence" value="ECO:0007669"/>
    <property type="project" value="UniProtKB-KW"/>
</dbReference>
<dbReference type="GO" id="GO:0032259">
    <property type="term" value="P:methylation"/>
    <property type="evidence" value="ECO:0007669"/>
    <property type="project" value="UniProtKB-KW"/>
</dbReference>
<dbReference type="CDD" id="cd06445">
    <property type="entry name" value="ATase"/>
    <property type="match status" value="1"/>
</dbReference>
<dbReference type="Gene3D" id="1.10.10.10">
    <property type="entry name" value="Winged helix-like DNA-binding domain superfamily/Winged helix DNA-binding domain"/>
    <property type="match status" value="1"/>
</dbReference>
<dbReference type="InterPro" id="IPR014048">
    <property type="entry name" value="MethylDNA_cys_MeTrfase_DNA-bd"/>
</dbReference>
<dbReference type="InterPro" id="IPR036217">
    <property type="entry name" value="MethylDNA_cys_MeTrfase_DNAb"/>
</dbReference>
<dbReference type="InterPro" id="IPR036388">
    <property type="entry name" value="WH-like_DNA-bd_sf"/>
</dbReference>
<dbReference type="NCBIfam" id="TIGR00589">
    <property type="entry name" value="ogt"/>
    <property type="match status" value="1"/>
</dbReference>
<dbReference type="PANTHER" id="PTHR10815">
    <property type="entry name" value="METHYLATED-DNA--PROTEIN-CYSTEINE METHYLTRANSFERASE"/>
    <property type="match status" value="1"/>
</dbReference>
<dbReference type="PANTHER" id="PTHR10815:SF13">
    <property type="entry name" value="METHYLATED-DNA--PROTEIN-CYSTEINE METHYLTRANSFERASE"/>
    <property type="match status" value="1"/>
</dbReference>
<dbReference type="Pfam" id="PF01035">
    <property type="entry name" value="DNA_binding_1"/>
    <property type="match status" value="1"/>
</dbReference>
<dbReference type="SUPFAM" id="SSF46767">
    <property type="entry name" value="Methylated DNA-protein cysteine methyltransferase, C-terminal domain"/>
    <property type="match status" value="1"/>
</dbReference>
<name>MGMT_DEBHA</name>
<evidence type="ECO:0000250" key="1"/>
<evidence type="ECO:0000305" key="2"/>
<sequence>MKNIYLLYSIIDVSYTKALIVTNTHGSLYYASLGDKPEVLIVTMKKDFARFKNYVLQPIVGKANSEVSETLEKFRLMAEDPRLINTMHKQIPYEFIFGTELQRKVWNQLMNTNASETVCYSQMASNLGMPKSSRVVGAACGANKIALFVPCHRALTKSGQISGYRWGVPLKQRLLKLEQKPLQKESSLKEK</sequence>
<organism>
    <name type="scientific">Debaryomyces hansenii (strain ATCC 36239 / CBS 767 / BCRC 21394 / JCM 1990 / NBRC 0083 / IGC 2968)</name>
    <name type="common">Yeast</name>
    <name type="synonym">Torulaspora hansenii</name>
    <dbReference type="NCBI Taxonomy" id="284592"/>
    <lineage>
        <taxon>Eukaryota</taxon>
        <taxon>Fungi</taxon>
        <taxon>Dikarya</taxon>
        <taxon>Ascomycota</taxon>
        <taxon>Saccharomycotina</taxon>
        <taxon>Pichiomycetes</taxon>
        <taxon>Debaryomycetaceae</taxon>
        <taxon>Debaryomyces</taxon>
    </lineage>
</organism>
<gene>
    <name type="primary">MGT1</name>
    <name type="ordered locus">DEHA2B15752g</name>
</gene>
<accession>Q6BVY4</accession>
<accession>B5RSW6</accession>
<reference key="1">
    <citation type="journal article" date="2004" name="Nature">
        <title>Genome evolution in yeasts.</title>
        <authorList>
            <person name="Dujon B."/>
            <person name="Sherman D."/>
            <person name="Fischer G."/>
            <person name="Durrens P."/>
            <person name="Casaregola S."/>
            <person name="Lafontaine I."/>
            <person name="de Montigny J."/>
            <person name="Marck C."/>
            <person name="Neuveglise C."/>
            <person name="Talla E."/>
            <person name="Goffard N."/>
            <person name="Frangeul L."/>
            <person name="Aigle M."/>
            <person name="Anthouard V."/>
            <person name="Babour A."/>
            <person name="Barbe V."/>
            <person name="Barnay S."/>
            <person name="Blanchin S."/>
            <person name="Beckerich J.-M."/>
            <person name="Beyne E."/>
            <person name="Bleykasten C."/>
            <person name="Boisrame A."/>
            <person name="Boyer J."/>
            <person name="Cattolico L."/>
            <person name="Confanioleri F."/>
            <person name="de Daruvar A."/>
            <person name="Despons L."/>
            <person name="Fabre E."/>
            <person name="Fairhead C."/>
            <person name="Ferry-Dumazet H."/>
            <person name="Groppi A."/>
            <person name="Hantraye F."/>
            <person name="Hennequin C."/>
            <person name="Jauniaux N."/>
            <person name="Joyet P."/>
            <person name="Kachouri R."/>
            <person name="Kerrest A."/>
            <person name="Koszul R."/>
            <person name="Lemaire M."/>
            <person name="Lesur I."/>
            <person name="Ma L."/>
            <person name="Muller H."/>
            <person name="Nicaud J.-M."/>
            <person name="Nikolski M."/>
            <person name="Oztas S."/>
            <person name="Ozier-Kalogeropoulos O."/>
            <person name="Pellenz S."/>
            <person name="Potier S."/>
            <person name="Richard G.-F."/>
            <person name="Straub M.-L."/>
            <person name="Suleau A."/>
            <person name="Swennen D."/>
            <person name="Tekaia F."/>
            <person name="Wesolowski-Louvel M."/>
            <person name="Westhof E."/>
            <person name="Wirth B."/>
            <person name="Zeniou-Meyer M."/>
            <person name="Zivanovic Y."/>
            <person name="Bolotin-Fukuhara M."/>
            <person name="Thierry A."/>
            <person name="Bouchier C."/>
            <person name="Caudron B."/>
            <person name="Scarpelli C."/>
            <person name="Gaillardin C."/>
            <person name="Weissenbach J."/>
            <person name="Wincker P."/>
            <person name="Souciet J.-L."/>
        </authorList>
    </citation>
    <scope>NUCLEOTIDE SEQUENCE [LARGE SCALE GENOMIC DNA]</scope>
    <source>
        <strain>ATCC 36239 / CBS 767 / BCRC 21394 / JCM 1990 / NBRC 0083 / IGC 2968</strain>
    </source>
</reference>
<proteinExistence type="inferred from homology"/>